<gene>
    <name evidence="2" type="primary">folE</name>
    <name type="ordered locus">SAV_4667</name>
</gene>
<keyword id="KW-0342">GTP-binding</keyword>
<keyword id="KW-0378">Hydrolase</keyword>
<keyword id="KW-0479">Metal-binding</keyword>
<keyword id="KW-0547">Nucleotide-binding</keyword>
<keyword id="KW-0554">One-carbon metabolism</keyword>
<keyword id="KW-1185">Reference proteome</keyword>
<keyword id="KW-0862">Zinc</keyword>
<comment type="catalytic activity">
    <reaction evidence="2">
        <text>GTP + H2O = 7,8-dihydroneopterin 3'-triphosphate + formate + H(+)</text>
        <dbReference type="Rhea" id="RHEA:17473"/>
        <dbReference type="ChEBI" id="CHEBI:15377"/>
        <dbReference type="ChEBI" id="CHEBI:15378"/>
        <dbReference type="ChEBI" id="CHEBI:15740"/>
        <dbReference type="ChEBI" id="CHEBI:37565"/>
        <dbReference type="ChEBI" id="CHEBI:58462"/>
        <dbReference type="EC" id="3.5.4.16"/>
    </reaction>
</comment>
<comment type="pathway">
    <text evidence="2">Cofactor biosynthesis; 7,8-dihydroneopterin triphosphate biosynthesis; 7,8-dihydroneopterin triphosphate from GTP: step 1/1.</text>
</comment>
<comment type="subunit">
    <text evidence="1">Toroid-shaped homodecamer, composed of two pentamers of five dimers.</text>
</comment>
<comment type="similarity">
    <text evidence="2">Belongs to the GTP cyclohydrolase I family.</text>
</comment>
<dbReference type="EC" id="3.5.4.16" evidence="2"/>
<dbReference type="EMBL" id="BA000030">
    <property type="protein sequence ID" value="BAC72379.1"/>
    <property type="molecule type" value="Genomic_DNA"/>
</dbReference>
<dbReference type="RefSeq" id="WP_010986091.1">
    <property type="nucleotide sequence ID" value="NZ_JZJK01000062.1"/>
</dbReference>
<dbReference type="SMR" id="Q82EE8"/>
<dbReference type="GeneID" id="41541748"/>
<dbReference type="KEGG" id="sma:SAVERM_4667"/>
<dbReference type="eggNOG" id="COG0302">
    <property type="taxonomic scope" value="Bacteria"/>
</dbReference>
<dbReference type="HOGENOM" id="CLU_049768_3_3_11"/>
<dbReference type="OrthoDB" id="9801207at2"/>
<dbReference type="UniPathway" id="UPA00848">
    <property type="reaction ID" value="UER00151"/>
</dbReference>
<dbReference type="Proteomes" id="UP000000428">
    <property type="component" value="Chromosome"/>
</dbReference>
<dbReference type="GO" id="GO:0005737">
    <property type="term" value="C:cytoplasm"/>
    <property type="evidence" value="ECO:0007669"/>
    <property type="project" value="TreeGrafter"/>
</dbReference>
<dbReference type="GO" id="GO:0005525">
    <property type="term" value="F:GTP binding"/>
    <property type="evidence" value="ECO:0007669"/>
    <property type="project" value="UniProtKB-KW"/>
</dbReference>
<dbReference type="GO" id="GO:0003934">
    <property type="term" value="F:GTP cyclohydrolase I activity"/>
    <property type="evidence" value="ECO:0007669"/>
    <property type="project" value="UniProtKB-UniRule"/>
</dbReference>
<dbReference type="GO" id="GO:0008270">
    <property type="term" value="F:zinc ion binding"/>
    <property type="evidence" value="ECO:0007669"/>
    <property type="project" value="UniProtKB-UniRule"/>
</dbReference>
<dbReference type="GO" id="GO:0006730">
    <property type="term" value="P:one-carbon metabolic process"/>
    <property type="evidence" value="ECO:0007669"/>
    <property type="project" value="UniProtKB-UniRule"/>
</dbReference>
<dbReference type="GO" id="GO:0006729">
    <property type="term" value="P:tetrahydrobiopterin biosynthetic process"/>
    <property type="evidence" value="ECO:0007669"/>
    <property type="project" value="TreeGrafter"/>
</dbReference>
<dbReference type="GO" id="GO:0046654">
    <property type="term" value="P:tetrahydrofolate biosynthetic process"/>
    <property type="evidence" value="ECO:0007669"/>
    <property type="project" value="UniProtKB-UniRule"/>
</dbReference>
<dbReference type="FunFam" id="1.10.286.10:FF:000001">
    <property type="entry name" value="GTP cyclohydrolase 1"/>
    <property type="match status" value="1"/>
</dbReference>
<dbReference type="FunFam" id="3.30.1130.10:FF:000001">
    <property type="entry name" value="GTP cyclohydrolase 1"/>
    <property type="match status" value="1"/>
</dbReference>
<dbReference type="Gene3D" id="1.10.286.10">
    <property type="match status" value="1"/>
</dbReference>
<dbReference type="Gene3D" id="3.30.1130.10">
    <property type="match status" value="1"/>
</dbReference>
<dbReference type="HAMAP" id="MF_00223">
    <property type="entry name" value="FolE"/>
    <property type="match status" value="1"/>
</dbReference>
<dbReference type="InterPro" id="IPR043133">
    <property type="entry name" value="GTP-CH-I_C/QueF"/>
</dbReference>
<dbReference type="InterPro" id="IPR043134">
    <property type="entry name" value="GTP-CH-I_N"/>
</dbReference>
<dbReference type="InterPro" id="IPR001474">
    <property type="entry name" value="GTP_CycHdrlase_I"/>
</dbReference>
<dbReference type="InterPro" id="IPR018234">
    <property type="entry name" value="GTP_CycHdrlase_I_CS"/>
</dbReference>
<dbReference type="InterPro" id="IPR020602">
    <property type="entry name" value="GTP_CycHdrlase_I_dom"/>
</dbReference>
<dbReference type="NCBIfam" id="TIGR00063">
    <property type="entry name" value="folE"/>
    <property type="match status" value="1"/>
</dbReference>
<dbReference type="NCBIfam" id="NF006825">
    <property type="entry name" value="PRK09347.1-2"/>
    <property type="match status" value="1"/>
</dbReference>
<dbReference type="NCBIfam" id="NF006826">
    <property type="entry name" value="PRK09347.1-3"/>
    <property type="match status" value="1"/>
</dbReference>
<dbReference type="PANTHER" id="PTHR11109:SF7">
    <property type="entry name" value="GTP CYCLOHYDROLASE 1"/>
    <property type="match status" value="1"/>
</dbReference>
<dbReference type="PANTHER" id="PTHR11109">
    <property type="entry name" value="GTP CYCLOHYDROLASE I"/>
    <property type="match status" value="1"/>
</dbReference>
<dbReference type="Pfam" id="PF01227">
    <property type="entry name" value="GTP_cyclohydroI"/>
    <property type="match status" value="1"/>
</dbReference>
<dbReference type="SUPFAM" id="SSF55620">
    <property type="entry name" value="Tetrahydrobiopterin biosynthesis enzymes-like"/>
    <property type="match status" value="1"/>
</dbReference>
<dbReference type="PROSITE" id="PS00859">
    <property type="entry name" value="GTP_CYCLOHYDROL_1_1"/>
    <property type="match status" value="1"/>
</dbReference>
<dbReference type="PROSITE" id="PS00860">
    <property type="entry name" value="GTP_CYCLOHYDROL_1_2"/>
    <property type="match status" value="1"/>
</dbReference>
<reference key="1">
    <citation type="journal article" date="2001" name="Proc. Natl. Acad. Sci. U.S.A.">
        <title>Genome sequence of an industrial microorganism Streptomyces avermitilis: deducing the ability of producing secondary metabolites.</title>
        <authorList>
            <person name="Omura S."/>
            <person name="Ikeda H."/>
            <person name="Ishikawa J."/>
            <person name="Hanamoto A."/>
            <person name="Takahashi C."/>
            <person name="Shinose M."/>
            <person name="Takahashi Y."/>
            <person name="Horikawa H."/>
            <person name="Nakazawa H."/>
            <person name="Osonoe T."/>
            <person name="Kikuchi H."/>
            <person name="Shiba T."/>
            <person name="Sakaki Y."/>
            <person name="Hattori M."/>
        </authorList>
    </citation>
    <scope>NUCLEOTIDE SEQUENCE [LARGE SCALE GENOMIC DNA]</scope>
    <source>
        <strain>ATCC 31267 / DSM 46492 / JCM 5070 / NBRC 14893 / NCIMB 12804 / NRRL 8165 / MA-4680</strain>
    </source>
</reference>
<reference key="2">
    <citation type="journal article" date="2003" name="Nat. Biotechnol.">
        <title>Complete genome sequence and comparative analysis of the industrial microorganism Streptomyces avermitilis.</title>
        <authorList>
            <person name="Ikeda H."/>
            <person name="Ishikawa J."/>
            <person name="Hanamoto A."/>
            <person name="Shinose M."/>
            <person name="Kikuchi H."/>
            <person name="Shiba T."/>
            <person name="Sakaki Y."/>
            <person name="Hattori M."/>
            <person name="Omura S."/>
        </authorList>
    </citation>
    <scope>NUCLEOTIDE SEQUENCE [LARGE SCALE GENOMIC DNA]</scope>
    <source>
        <strain>ATCC 31267 / DSM 46492 / JCM 5070 / NBRC 14893 / NCIMB 12804 / NRRL 8165 / MA-4680</strain>
    </source>
</reference>
<proteinExistence type="inferred from homology"/>
<evidence type="ECO:0000250" key="1"/>
<evidence type="ECO:0000255" key="2">
    <source>
        <dbReference type="HAMAP-Rule" id="MF_00223"/>
    </source>
</evidence>
<organism>
    <name type="scientific">Streptomyces avermitilis (strain ATCC 31267 / DSM 46492 / JCM 5070 / NBRC 14893 / NCIMB 12804 / NRRL 8165 / MA-4680)</name>
    <dbReference type="NCBI Taxonomy" id="227882"/>
    <lineage>
        <taxon>Bacteria</taxon>
        <taxon>Bacillati</taxon>
        <taxon>Actinomycetota</taxon>
        <taxon>Actinomycetes</taxon>
        <taxon>Kitasatosporales</taxon>
        <taxon>Streptomycetaceae</taxon>
        <taxon>Streptomyces</taxon>
    </lineage>
</organism>
<feature type="chain" id="PRO_0000119446" description="GTP cyclohydrolase 1">
    <location>
        <begin position="1"/>
        <end position="201"/>
    </location>
</feature>
<feature type="binding site" evidence="2">
    <location>
        <position position="90"/>
    </location>
    <ligand>
        <name>Zn(2+)</name>
        <dbReference type="ChEBI" id="CHEBI:29105"/>
    </ligand>
</feature>
<feature type="binding site" evidence="2">
    <location>
        <position position="93"/>
    </location>
    <ligand>
        <name>Zn(2+)</name>
        <dbReference type="ChEBI" id="CHEBI:29105"/>
    </ligand>
</feature>
<feature type="binding site" evidence="2">
    <location>
        <position position="163"/>
    </location>
    <ligand>
        <name>Zn(2+)</name>
        <dbReference type="ChEBI" id="CHEBI:29105"/>
    </ligand>
</feature>
<accession>Q82EE8</accession>
<name>GCH1_STRAW</name>
<sequence length="201" mass="22266">MTDPVTLDGEGTIGEFDEKRAENAVRELLIAVGEDPDREGLRETPGRVARAYREIFAGLWQKPEDVLTTTFDIGHDEMVLVKDIEVLSSCEHHLVPFVGVAHVGYIPSTDGKITGLSKLARLVDVYARRPQVQERLTTQVADSLMEILEPRGVIVVVECEHMCMSMRGVRKPGAKTITSAVRGQLRDPATRNEAMSLIMAR</sequence>
<protein>
    <recommendedName>
        <fullName evidence="2">GTP cyclohydrolase 1</fullName>
        <ecNumber evidence="2">3.5.4.16</ecNumber>
    </recommendedName>
    <alternativeName>
        <fullName evidence="2">GTP cyclohydrolase I</fullName>
        <shortName evidence="2">GTP-CH-I</shortName>
    </alternativeName>
</protein>